<comment type="function">
    <text evidence="1">Catalyzes the reaction of cyanate with bicarbonate to produce ammonia and carbon dioxide.</text>
</comment>
<comment type="catalytic activity">
    <reaction evidence="1">
        <text>cyanate + hydrogencarbonate + 3 H(+) = NH4(+) + 2 CO2</text>
        <dbReference type="Rhea" id="RHEA:11120"/>
        <dbReference type="ChEBI" id="CHEBI:15378"/>
        <dbReference type="ChEBI" id="CHEBI:16526"/>
        <dbReference type="ChEBI" id="CHEBI:17544"/>
        <dbReference type="ChEBI" id="CHEBI:28938"/>
        <dbReference type="ChEBI" id="CHEBI:29195"/>
        <dbReference type="EC" id="4.2.1.104"/>
    </reaction>
</comment>
<comment type="similarity">
    <text evidence="1">Belongs to the cyanase family.</text>
</comment>
<feature type="chain" id="PRO_0000187527" description="Cyanate hydratase">
    <location>
        <begin position="1"/>
        <end position="147"/>
    </location>
</feature>
<feature type="active site" evidence="1">
    <location>
        <position position="88"/>
    </location>
</feature>
<feature type="active site" evidence="1">
    <location>
        <position position="91"/>
    </location>
</feature>
<feature type="active site" evidence="1">
    <location>
        <position position="114"/>
    </location>
</feature>
<protein>
    <recommendedName>
        <fullName evidence="1">Cyanate hydratase</fullName>
        <shortName evidence="1">Cyanase</shortName>
        <ecNumber evidence="1">4.2.1.104</ecNumber>
    </recommendedName>
    <alternativeName>
        <fullName evidence="1">Cyanate hydrolase</fullName>
    </alternativeName>
    <alternativeName>
        <fullName evidence="1">Cyanate lyase</fullName>
    </alternativeName>
</protein>
<proteinExistence type="inferred from homology"/>
<evidence type="ECO:0000255" key="1">
    <source>
        <dbReference type="HAMAP-Rule" id="MF_00535"/>
    </source>
</evidence>
<sequence>MTLPSLTKLLLKAKKEKNLSFEDLGNLINRDEVWVASLFYGQATASEEEATSLIAALDLTSDLKEDLSTPPVKGCLDPVIPTDPLIYRFYEIMQVYGLPMKDVIQEKFGDGIMSAIDFSIEVDKVEDPKGDRVLVKMCGKFLPYKKW</sequence>
<gene>
    <name evidence="1" type="primary">cynS</name>
    <name type="ordered locus">PMM0373</name>
</gene>
<reference key="1">
    <citation type="journal article" date="2003" name="Nature">
        <title>Genome divergence in two Prochlorococcus ecotypes reflects oceanic niche differentiation.</title>
        <authorList>
            <person name="Rocap G."/>
            <person name="Larimer F.W."/>
            <person name="Lamerdin J.E."/>
            <person name="Malfatti S."/>
            <person name="Chain P."/>
            <person name="Ahlgren N.A."/>
            <person name="Arellano A."/>
            <person name="Coleman M."/>
            <person name="Hauser L."/>
            <person name="Hess W.R."/>
            <person name="Johnson Z.I."/>
            <person name="Land M.L."/>
            <person name="Lindell D."/>
            <person name="Post A.F."/>
            <person name="Regala W."/>
            <person name="Shah M."/>
            <person name="Shaw S.L."/>
            <person name="Steglich C."/>
            <person name="Sullivan M.B."/>
            <person name="Ting C.S."/>
            <person name="Tolonen A."/>
            <person name="Webb E.A."/>
            <person name="Zinser E.R."/>
            <person name="Chisholm S.W."/>
        </authorList>
    </citation>
    <scope>NUCLEOTIDE SEQUENCE [LARGE SCALE GENOMIC DNA]</scope>
    <source>
        <strain>CCMP1986 / NIES-2087 / MED4</strain>
    </source>
</reference>
<organism>
    <name type="scientific">Prochlorococcus marinus subsp. pastoris (strain CCMP1986 / NIES-2087 / MED4)</name>
    <dbReference type="NCBI Taxonomy" id="59919"/>
    <lineage>
        <taxon>Bacteria</taxon>
        <taxon>Bacillati</taxon>
        <taxon>Cyanobacteriota</taxon>
        <taxon>Cyanophyceae</taxon>
        <taxon>Synechococcales</taxon>
        <taxon>Prochlorococcaceae</taxon>
        <taxon>Prochlorococcus</taxon>
    </lineage>
</organism>
<dbReference type="EC" id="4.2.1.104" evidence="1"/>
<dbReference type="EMBL" id="BX548174">
    <property type="protein sequence ID" value="CAE18832.1"/>
    <property type="molecule type" value="Genomic_DNA"/>
</dbReference>
<dbReference type="RefSeq" id="WP_011132010.1">
    <property type="nucleotide sequence ID" value="NC_005072.1"/>
</dbReference>
<dbReference type="SMR" id="Q7V2U0"/>
<dbReference type="STRING" id="59919.PMM0373"/>
<dbReference type="KEGG" id="pmm:PMM0373"/>
<dbReference type="eggNOG" id="COG1513">
    <property type="taxonomic scope" value="Bacteria"/>
</dbReference>
<dbReference type="HOGENOM" id="CLU_103452_1_0_3"/>
<dbReference type="OrthoDB" id="9785870at2"/>
<dbReference type="BRENDA" id="4.2.1.104">
    <property type="organism ID" value="5024"/>
</dbReference>
<dbReference type="Proteomes" id="UP000001026">
    <property type="component" value="Chromosome"/>
</dbReference>
<dbReference type="GO" id="GO:0008824">
    <property type="term" value="F:cyanate hydratase activity"/>
    <property type="evidence" value="ECO:0007669"/>
    <property type="project" value="UniProtKB-UniRule"/>
</dbReference>
<dbReference type="GO" id="GO:0003677">
    <property type="term" value="F:DNA binding"/>
    <property type="evidence" value="ECO:0007669"/>
    <property type="project" value="InterPro"/>
</dbReference>
<dbReference type="GO" id="GO:0009439">
    <property type="term" value="P:cyanate metabolic process"/>
    <property type="evidence" value="ECO:0007669"/>
    <property type="project" value="UniProtKB-UniRule"/>
</dbReference>
<dbReference type="CDD" id="cd00559">
    <property type="entry name" value="Cyanase_C"/>
    <property type="match status" value="1"/>
</dbReference>
<dbReference type="Gene3D" id="3.30.1160.10">
    <property type="entry name" value="Cyanate lyase, C-terminal domain"/>
    <property type="match status" value="1"/>
</dbReference>
<dbReference type="Gene3D" id="1.10.260.40">
    <property type="entry name" value="lambda repressor-like DNA-binding domains"/>
    <property type="match status" value="1"/>
</dbReference>
<dbReference type="HAMAP" id="MF_00535">
    <property type="entry name" value="Cyanate_hydrat"/>
    <property type="match status" value="1"/>
</dbReference>
<dbReference type="InterPro" id="IPR008076">
    <property type="entry name" value="Cyanase"/>
</dbReference>
<dbReference type="InterPro" id="IPR003712">
    <property type="entry name" value="Cyanate_lyase_C"/>
</dbReference>
<dbReference type="InterPro" id="IPR036581">
    <property type="entry name" value="Cyanate_lyase_C_sf"/>
</dbReference>
<dbReference type="InterPro" id="IPR048564">
    <property type="entry name" value="CYNS_N"/>
</dbReference>
<dbReference type="InterPro" id="IPR010982">
    <property type="entry name" value="Lambda_DNA-bd_dom_sf"/>
</dbReference>
<dbReference type="NCBIfam" id="TIGR00673">
    <property type="entry name" value="cynS"/>
    <property type="match status" value="1"/>
</dbReference>
<dbReference type="NCBIfam" id="NF002773">
    <property type="entry name" value="PRK02866.1"/>
    <property type="match status" value="1"/>
</dbReference>
<dbReference type="PANTHER" id="PTHR34186">
    <property type="entry name" value="CYANATE HYDRATASE"/>
    <property type="match status" value="1"/>
</dbReference>
<dbReference type="PANTHER" id="PTHR34186:SF2">
    <property type="entry name" value="CYANATE HYDRATASE"/>
    <property type="match status" value="1"/>
</dbReference>
<dbReference type="Pfam" id="PF02560">
    <property type="entry name" value="Cyanate_lyase"/>
    <property type="match status" value="1"/>
</dbReference>
<dbReference type="Pfam" id="PF21291">
    <property type="entry name" value="CYNS_N"/>
    <property type="match status" value="1"/>
</dbReference>
<dbReference type="PIRSF" id="PIRSF001263">
    <property type="entry name" value="Cyanate_hydratas"/>
    <property type="match status" value="1"/>
</dbReference>
<dbReference type="PRINTS" id="PR01693">
    <property type="entry name" value="CYANASE"/>
</dbReference>
<dbReference type="SMART" id="SM01116">
    <property type="entry name" value="Cyanate_lyase"/>
    <property type="match status" value="1"/>
</dbReference>
<dbReference type="SUPFAM" id="SSF55234">
    <property type="entry name" value="Cyanase C-terminal domain"/>
    <property type="match status" value="1"/>
</dbReference>
<dbReference type="SUPFAM" id="SSF47413">
    <property type="entry name" value="lambda repressor-like DNA-binding domains"/>
    <property type="match status" value="1"/>
</dbReference>
<keyword id="KW-0456">Lyase</keyword>
<accession>Q7V2U0</accession>
<name>CYNS_PROMP</name>